<reference key="1">
    <citation type="journal article" date="2005" name="Nature">
        <title>Sequencing of Aspergillus nidulans and comparative analysis with A. fumigatus and A. oryzae.</title>
        <authorList>
            <person name="Galagan J.E."/>
            <person name="Calvo S.E."/>
            <person name="Cuomo C."/>
            <person name="Ma L.-J."/>
            <person name="Wortman J.R."/>
            <person name="Batzoglou S."/>
            <person name="Lee S.-I."/>
            <person name="Bastuerkmen M."/>
            <person name="Spevak C.C."/>
            <person name="Clutterbuck J."/>
            <person name="Kapitonov V."/>
            <person name="Jurka J."/>
            <person name="Scazzocchio C."/>
            <person name="Farman M.L."/>
            <person name="Butler J."/>
            <person name="Purcell S."/>
            <person name="Harris S."/>
            <person name="Braus G.H."/>
            <person name="Draht O."/>
            <person name="Busch S."/>
            <person name="D'Enfert C."/>
            <person name="Bouchier C."/>
            <person name="Goldman G.H."/>
            <person name="Bell-Pedersen D."/>
            <person name="Griffiths-Jones S."/>
            <person name="Doonan J.H."/>
            <person name="Yu J."/>
            <person name="Vienken K."/>
            <person name="Pain A."/>
            <person name="Freitag M."/>
            <person name="Selker E.U."/>
            <person name="Archer D.B."/>
            <person name="Penalva M.A."/>
            <person name="Oakley B.R."/>
            <person name="Momany M."/>
            <person name="Tanaka T."/>
            <person name="Kumagai T."/>
            <person name="Asai K."/>
            <person name="Machida M."/>
            <person name="Nierman W.C."/>
            <person name="Denning D.W."/>
            <person name="Caddick M.X."/>
            <person name="Hynes M."/>
            <person name="Paoletti M."/>
            <person name="Fischer R."/>
            <person name="Miller B.L."/>
            <person name="Dyer P.S."/>
            <person name="Sachs M.S."/>
            <person name="Osmani S.A."/>
            <person name="Birren B.W."/>
        </authorList>
    </citation>
    <scope>NUCLEOTIDE SEQUENCE [LARGE SCALE GENOMIC DNA]</scope>
    <source>
        <strain>FGSC A4 / ATCC 38163 / CBS 112.46 / NRRL 194 / M139</strain>
    </source>
</reference>
<reference key="2">
    <citation type="journal article" date="2009" name="Fungal Genet. Biol.">
        <title>The 2008 update of the Aspergillus nidulans genome annotation: a community effort.</title>
        <authorList>
            <person name="Wortman J.R."/>
            <person name="Gilsenan J.M."/>
            <person name="Joardar V."/>
            <person name="Deegan J."/>
            <person name="Clutterbuck J."/>
            <person name="Andersen M.R."/>
            <person name="Archer D."/>
            <person name="Bencina M."/>
            <person name="Braus G."/>
            <person name="Coutinho P."/>
            <person name="von Dohren H."/>
            <person name="Doonan J."/>
            <person name="Driessen A.J."/>
            <person name="Durek P."/>
            <person name="Espeso E."/>
            <person name="Fekete E."/>
            <person name="Flipphi M."/>
            <person name="Estrada C.G."/>
            <person name="Geysens S."/>
            <person name="Goldman G."/>
            <person name="de Groot P.W."/>
            <person name="Hansen K."/>
            <person name="Harris S.D."/>
            <person name="Heinekamp T."/>
            <person name="Helmstaedt K."/>
            <person name="Henrissat B."/>
            <person name="Hofmann G."/>
            <person name="Homan T."/>
            <person name="Horio T."/>
            <person name="Horiuchi H."/>
            <person name="James S."/>
            <person name="Jones M."/>
            <person name="Karaffa L."/>
            <person name="Karanyi Z."/>
            <person name="Kato M."/>
            <person name="Keller N."/>
            <person name="Kelly D.E."/>
            <person name="Kiel J.A."/>
            <person name="Kim J.M."/>
            <person name="van der Klei I.J."/>
            <person name="Klis F.M."/>
            <person name="Kovalchuk A."/>
            <person name="Krasevec N."/>
            <person name="Kubicek C.P."/>
            <person name="Liu B."/>
            <person name="Maccabe A."/>
            <person name="Meyer V."/>
            <person name="Mirabito P."/>
            <person name="Miskei M."/>
            <person name="Mos M."/>
            <person name="Mullins J."/>
            <person name="Nelson D.R."/>
            <person name="Nielsen J."/>
            <person name="Oakley B.R."/>
            <person name="Osmani S.A."/>
            <person name="Pakula T."/>
            <person name="Paszewski A."/>
            <person name="Paulsen I."/>
            <person name="Pilsyk S."/>
            <person name="Pocsi I."/>
            <person name="Punt P.J."/>
            <person name="Ram A.F."/>
            <person name="Ren Q."/>
            <person name="Robellet X."/>
            <person name="Robson G."/>
            <person name="Seiboth B."/>
            <person name="van Solingen P."/>
            <person name="Specht T."/>
            <person name="Sun J."/>
            <person name="Taheri-Talesh N."/>
            <person name="Takeshita N."/>
            <person name="Ussery D."/>
            <person name="vanKuyk P.A."/>
            <person name="Visser H."/>
            <person name="van de Vondervoort P.J."/>
            <person name="de Vries R.P."/>
            <person name="Walton J."/>
            <person name="Xiang X."/>
            <person name="Xiong Y."/>
            <person name="Zeng A.P."/>
            <person name="Brandt B.W."/>
            <person name="Cornell M.J."/>
            <person name="van den Hondel C.A."/>
            <person name="Visser J."/>
            <person name="Oliver S.G."/>
            <person name="Turner G."/>
        </authorList>
    </citation>
    <scope>GENOME REANNOTATION</scope>
    <source>
        <strain>FGSC A4 / ATCC 38163 / CBS 112.46 / NRRL 194 / M139</strain>
    </source>
</reference>
<sequence>MSLPGLELTQPSAESQSASAPPTQINLSAGSEWRFEVAFGTTVRVKLLTGTAELFGTELAPSQTYTFSGTKAAIYTWHGCTLEVSAGDAVSGLDGTTSASGRGGLGAGGCQSEYIAEETPMVEYANVHFALEGLRAEAKASGRDGPRVLILGPEDAGKTSLSKILTAYAVKVGREPIVVNLDPTEGMLSVPGTVSATAFRAMLDVEEGWGSSPMSGPSAVPVKLPLVYFYPIVNPLEAEGSVFRPIVSRLALSVMGRMAEDEDAKETGIIVDTPGILSQSRAGALEMINHIVTEFSITTILVIGSERLYSLMMKSYDNKPSSSASSAASDERISVVKLSKSGGCVDRDAAFMKAVRESQIRTYFFGNPVPTTASSALSISSSSTTNVTLSPHAQQLDFDAIALYNYTTSSAEEDQNDEDDYDPAQLTTDSFLPGNNEAESASSLPGLNSAANASAAAAAGALVPLKKVPGPAPSALANTLLAITHASPTSSPSEIRDASTMGFLYVADVDSERGKIRVLAPVGGRVPSRAIIWGKKWPAEVVGLVG</sequence>
<proteinExistence type="inferred from homology"/>
<gene>
    <name type="primary">clp1</name>
    <name type="ORF">AN0161</name>
</gene>
<accession>Q5BH19</accession>
<accession>C8VQ49</accession>
<evidence type="ECO:0000255" key="1">
    <source>
        <dbReference type="HAMAP-Rule" id="MF_03035"/>
    </source>
</evidence>
<evidence type="ECO:0000256" key="2">
    <source>
        <dbReference type="SAM" id="MobiDB-lite"/>
    </source>
</evidence>
<evidence type="ECO:0000305" key="3"/>
<keyword id="KW-0067">ATP-binding</keyword>
<keyword id="KW-0507">mRNA processing</keyword>
<keyword id="KW-0547">Nucleotide-binding</keyword>
<keyword id="KW-0539">Nucleus</keyword>
<keyword id="KW-1185">Reference proteome</keyword>
<protein>
    <recommendedName>
        <fullName evidence="1">mRNA cleavage and polyadenylation factor clp1</fullName>
    </recommendedName>
</protein>
<comment type="function">
    <text evidence="1">Required for endonucleolytic cleavage during polyadenylation-dependent pre-mRNA 3'-end formation.</text>
</comment>
<comment type="subunit">
    <text evidence="1">Component of a pre-mRNA cleavage factor complex. Interacts directly with PCF11.</text>
</comment>
<comment type="subcellular location">
    <subcellularLocation>
        <location evidence="1">Nucleus</location>
    </subcellularLocation>
</comment>
<comment type="similarity">
    <text evidence="1">Belongs to the Clp1 family. Clp1 subfamily.</text>
</comment>
<comment type="caution">
    <text evidence="3">May lack the polyribonucleotide 5'-hydroxyl-kinase and polynucleotide 5'-hydroxyl-kinase activities that are characteristic of the human ortholog.</text>
</comment>
<comment type="sequence caution" evidence="3">
    <conflict type="erroneous gene model prediction">
        <sequence resource="EMBL-CDS" id="EAA66034"/>
    </conflict>
</comment>
<feature type="chain" id="PRO_0000375205" description="mRNA cleavage and polyadenylation factor clp1">
    <location>
        <begin position="1"/>
        <end position="546"/>
    </location>
</feature>
<feature type="region of interest" description="Disordered" evidence="2">
    <location>
        <begin position="1"/>
        <end position="25"/>
    </location>
</feature>
<feature type="region of interest" description="Disordered" evidence="2">
    <location>
        <begin position="410"/>
        <end position="445"/>
    </location>
</feature>
<feature type="compositionally biased region" description="Low complexity" evidence="2">
    <location>
        <begin position="9"/>
        <end position="24"/>
    </location>
</feature>
<feature type="compositionally biased region" description="Acidic residues" evidence="2">
    <location>
        <begin position="411"/>
        <end position="422"/>
    </location>
</feature>
<feature type="binding site" evidence="1">
    <location>
        <position position="32"/>
    </location>
    <ligand>
        <name>ATP</name>
        <dbReference type="ChEBI" id="CHEBI:30616"/>
    </ligand>
</feature>
<feature type="binding site" evidence="1">
    <location>
        <position position="71"/>
    </location>
    <ligand>
        <name>ATP</name>
        <dbReference type="ChEBI" id="CHEBI:30616"/>
    </ligand>
</feature>
<feature type="binding site" evidence="1">
    <location>
        <begin position="155"/>
        <end position="160"/>
    </location>
    <ligand>
        <name>ATP</name>
        <dbReference type="ChEBI" id="CHEBI:30616"/>
    </ligand>
</feature>
<dbReference type="EMBL" id="AACD01000005">
    <property type="protein sequence ID" value="EAA66034.1"/>
    <property type="status" value="ALT_SEQ"/>
    <property type="molecule type" value="Genomic_DNA"/>
</dbReference>
<dbReference type="EMBL" id="BN001308">
    <property type="protein sequence ID" value="CBF90066.1"/>
    <property type="molecule type" value="Genomic_DNA"/>
</dbReference>
<dbReference type="RefSeq" id="XP_657765.1">
    <property type="nucleotide sequence ID" value="XM_652673.1"/>
</dbReference>
<dbReference type="SMR" id="Q5BH19"/>
<dbReference type="BioGRID" id="1956714">
    <property type="interactions" value="1"/>
</dbReference>
<dbReference type="FunCoup" id="Q5BH19">
    <property type="interactions" value="790"/>
</dbReference>
<dbReference type="STRING" id="227321.Q5BH19"/>
<dbReference type="EnsemblFungi" id="CBF90066">
    <property type="protein sequence ID" value="CBF90066"/>
    <property type="gene ID" value="ANIA_00161"/>
</dbReference>
<dbReference type="VEuPathDB" id="FungiDB:AN0161"/>
<dbReference type="eggNOG" id="KOG2749">
    <property type="taxonomic scope" value="Eukaryota"/>
</dbReference>
<dbReference type="HOGENOM" id="CLU_018195_3_1_1"/>
<dbReference type="InParanoid" id="Q5BH19"/>
<dbReference type="OMA" id="VQYVNCH"/>
<dbReference type="OrthoDB" id="258143at2759"/>
<dbReference type="Proteomes" id="UP000000560">
    <property type="component" value="Chromosome VIII"/>
</dbReference>
<dbReference type="GO" id="GO:0005849">
    <property type="term" value="C:mRNA cleavage factor complex"/>
    <property type="evidence" value="ECO:0007669"/>
    <property type="project" value="UniProtKB-UniRule"/>
</dbReference>
<dbReference type="GO" id="GO:0005634">
    <property type="term" value="C:nucleus"/>
    <property type="evidence" value="ECO:0000318"/>
    <property type="project" value="GO_Central"/>
</dbReference>
<dbReference type="GO" id="GO:0005524">
    <property type="term" value="F:ATP binding"/>
    <property type="evidence" value="ECO:0007669"/>
    <property type="project" value="UniProtKB-UniRule"/>
</dbReference>
<dbReference type="GO" id="GO:0051731">
    <property type="term" value="F:polynucleotide 5'-hydroxyl-kinase activity"/>
    <property type="evidence" value="ECO:0000318"/>
    <property type="project" value="GO_Central"/>
</dbReference>
<dbReference type="GO" id="GO:0031124">
    <property type="term" value="P:mRNA 3'-end processing"/>
    <property type="evidence" value="ECO:0007669"/>
    <property type="project" value="UniProtKB-UniRule"/>
</dbReference>
<dbReference type="GO" id="GO:0006388">
    <property type="term" value="P:tRNA splicing, via endonucleolytic cleavage and ligation"/>
    <property type="evidence" value="ECO:0000318"/>
    <property type="project" value="GO_Central"/>
</dbReference>
<dbReference type="FunFam" id="3.40.50.300:FF:002095">
    <property type="entry name" value="mRNA cleavage and polyadenylation factor clp1"/>
    <property type="match status" value="1"/>
</dbReference>
<dbReference type="FunFam" id="2.60.120.1030:FF:000001">
    <property type="entry name" value="Protein CLP1 homolog 5"/>
    <property type="match status" value="1"/>
</dbReference>
<dbReference type="Gene3D" id="2.60.120.1030">
    <property type="entry name" value="Clp1, DNA binding domain"/>
    <property type="match status" value="1"/>
</dbReference>
<dbReference type="Gene3D" id="3.40.50.300">
    <property type="entry name" value="P-loop containing nucleotide triphosphate hydrolases"/>
    <property type="match status" value="1"/>
</dbReference>
<dbReference type="Gene3D" id="2.40.30.330">
    <property type="entry name" value="Pre-mRNA cleavage complex subunit Clp1, C-terminal domain"/>
    <property type="match status" value="1"/>
</dbReference>
<dbReference type="HAMAP" id="MF_03035">
    <property type="entry name" value="Clp1"/>
    <property type="match status" value="1"/>
</dbReference>
<dbReference type="InterPro" id="IPR028606">
    <property type="entry name" value="Clp1"/>
</dbReference>
<dbReference type="InterPro" id="IPR045116">
    <property type="entry name" value="Clp1/Grc3"/>
</dbReference>
<dbReference type="InterPro" id="IPR010655">
    <property type="entry name" value="Clp1_C"/>
</dbReference>
<dbReference type="InterPro" id="IPR038238">
    <property type="entry name" value="Clp1_C_sf"/>
</dbReference>
<dbReference type="InterPro" id="IPR032324">
    <property type="entry name" value="Clp1_N"/>
</dbReference>
<dbReference type="InterPro" id="IPR038239">
    <property type="entry name" value="Clp1_N_sf"/>
</dbReference>
<dbReference type="InterPro" id="IPR032319">
    <property type="entry name" value="CLP1_P"/>
</dbReference>
<dbReference type="InterPro" id="IPR027417">
    <property type="entry name" value="P-loop_NTPase"/>
</dbReference>
<dbReference type="PANTHER" id="PTHR12755">
    <property type="entry name" value="CLEAVAGE/POLYADENYLATION FACTOR IA SUBUNIT CLP1P"/>
    <property type="match status" value="1"/>
</dbReference>
<dbReference type="PANTHER" id="PTHR12755:SF6">
    <property type="entry name" value="POLYRIBONUCLEOTIDE 5'-HYDROXYL-KINASE CLP1"/>
    <property type="match status" value="1"/>
</dbReference>
<dbReference type="Pfam" id="PF06807">
    <property type="entry name" value="Clp1"/>
    <property type="match status" value="1"/>
</dbReference>
<dbReference type="Pfam" id="PF16573">
    <property type="entry name" value="CLP1_N"/>
    <property type="match status" value="1"/>
</dbReference>
<dbReference type="Pfam" id="PF16575">
    <property type="entry name" value="CLP1_P"/>
    <property type="match status" value="1"/>
</dbReference>
<dbReference type="SUPFAM" id="SSF52540">
    <property type="entry name" value="P-loop containing nucleoside triphosphate hydrolases"/>
    <property type="match status" value="1"/>
</dbReference>
<name>CLP1_EMENI</name>
<organism>
    <name type="scientific">Emericella nidulans (strain FGSC A4 / ATCC 38163 / CBS 112.46 / NRRL 194 / M139)</name>
    <name type="common">Aspergillus nidulans</name>
    <dbReference type="NCBI Taxonomy" id="227321"/>
    <lineage>
        <taxon>Eukaryota</taxon>
        <taxon>Fungi</taxon>
        <taxon>Dikarya</taxon>
        <taxon>Ascomycota</taxon>
        <taxon>Pezizomycotina</taxon>
        <taxon>Eurotiomycetes</taxon>
        <taxon>Eurotiomycetidae</taxon>
        <taxon>Eurotiales</taxon>
        <taxon>Aspergillaceae</taxon>
        <taxon>Aspergillus</taxon>
        <taxon>Aspergillus subgen. Nidulantes</taxon>
    </lineage>
</organism>